<sequence length="154" mass="16773">MKAIVQVRGEVNQEQGVRDTLEMLNLDRVNHATLVPETDAYDGMVTKVNDWVAHGEPSADVVATLIERRAEPAAGEGDIDDEWVADNTDYDGVEALAEALVDEETTLQEAGVSPTLRLHPPRGGHDGIKHPTKEGGQLGKHTTEEIDTLLEAMR</sequence>
<keyword id="KW-1185">Reference proteome</keyword>
<keyword id="KW-0687">Ribonucleoprotein</keyword>
<keyword id="KW-0689">Ribosomal protein</keyword>
<gene>
    <name evidence="1" type="primary">rpl30</name>
    <name type="ordered locus">NP_4896A</name>
</gene>
<evidence type="ECO:0000255" key="1">
    <source>
        <dbReference type="HAMAP-Rule" id="MF_01371"/>
    </source>
</evidence>
<evidence type="ECO:0000256" key="2">
    <source>
        <dbReference type="SAM" id="MobiDB-lite"/>
    </source>
</evidence>
<evidence type="ECO:0000305" key="3"/>
<organism>
    <name type="scientific">Natronomonas pharaonis (strain ATCC 35678 / DSM 2160 / CIP 103997 / JCM 8858 / NBRC 14720 / NCIMB 2260 / Gabara)</name>
    <name type="common">Halobacterium pharaonis</name>
    <dbReference type="NCBI Taxonomy" id="348780"/>
    <lineage>
        <taxon>Archaea</taxon>
        <taxon>Methanobacteriati</taxon>
        <taxon>Methanobacteriota</taxon>
        <taxon>Stenosarchaea group</taxon>
        <taxon>Halobacteria</taxon>
        <taxon>Halobacteriales</taxon>
        <taxon>Haloarculaceae</taxon>
        <taxon>Natronomonas</taxon>
    </lineage>
</organism>
<feature type="chain" id="PRO_0000273911" description="Large ribosomal subunit protein uL30">
    <location>
        <begin position="1"/>
        <end position="154"/>
    </location>
</feature>
<feature type="region of interest" description="Disordered" evidence="2">
    <location>
        <begin position="114"/>
        <end position="139"/>
    </location>
</feature>
<feature type="compositionally biased region" description="Basic and acidic residues" evidence="2">
    <location>
        <begin position="123"/>
        <end position="133"/>
    </location>
</feature>
<accession>Q3IMW7</accession>
<reference key="1">
    <citation type="journal article" date="2005" name="Genome Res.">
        <title>Living with two extremes: conclusions from the genome sequence of Natronomonas pharaonis.</title>
        <authorList>
            <person name="Falb M."/>
            <person name="Pfeiffer F."/>
            <person name="Palm P."/>
            <person name="Rodewald K."/>
            <person name="Hickmann V."/>
            <person name="Tittor J."/>
            <person name="Oesterhelt D."/>
        </authorList>
    </citation>
    <scope>NUCLEOTIDE SEQUENCE [LARGE SCALE GENOMIC DNA]</scope>
    <source>
        <strain>ATCC 35678 / DSM 2160 / CIP 103997 / JCM 8858 / NBRC 14720 / NCIMB 2260 / Gabara</strain>
    </source>
</reference>
<protein>
    <recommendedName>
        <fullName evidence="1">Large ribosomal subunit protein uL30</fullName>
    </recommendedName>
    <alternativeName>
        <fullName evidence="3">50S ribosomal protein L30</fullName>
    </alternativeName>
</protein>
<comment type="subunit">
    <text evidence="1">Part of the 50S ribosomal subunit.</text>
</comment>
<comment type="similarity">
    <text evidence="1">Belongs to the universal ribosomal protein uL30 family.</text>
</comment>
<dbReference type="EMBL" id="CR936257">
    <property type="protein sequence ID" value="CAI50539.1"/>
    <property type="molecule type" value="Genomic_DNA"/>
</dbReference>
<dbReference type="RefSeq" id="WP_011324151.1">
    <property type="nucleotide sequence ID" value="NC_007426.1"/>
</dbReference>
<dbReference type="SMR" id="Q3IMW7"/>
<dbReference type="STRING" id="348780.NP_4896A"/>
<dbReference type="EnsemblBacteria" id="CAI50539">
    <property type="protein sequence ID" value="CAI50539"/>
    <property type="gene ID" value="NP_4896A"/>
</dbReference>
<dbReference type="GeneID" id="3703138"/>
<dbReference type="KEGG" id="nph:NP_4896A"/>
<dbReference type="eggNOG" id="arCOG04086">
    <property type="taxonomic scope" value="Archaea"/>
</dbReference>
<dbReference type="HOGENOM" id="CLU_055156_6_0_2"/>
<dbReference type="OrthoDB" id="6379at2157"/>
<dbReference type="Proteomes" id="UP000002698">
    <property type="component" value="Chromosome"/>
</dbReference>
<dbReference type="GO" id="GO:0022625">
    <property type="term" value="C:cytosolic large ribosomal subunit"/>
    <property type="evidence" value="ECO:0007669"/>
    <property type="project" value="TreeGrafter"/>
</dbReference>
<dbReference type="GO" id="GO:0003723">
    <property type="term" value="F:RNA binding"/>
    <property type="evidence" value="ECO:0007669"/>
    <property type="project" value="TreeGrafter"/>
</dbReference>
<dbReference type="GO" id="GO:0003735">
    <property type="term" value="F:structural constituent of ribosome"/>
    <property type="evidence" value="ECO:0007669"/>
    <property type="project" value="InterPro"/>
</dbReference>
<dbReference type="GO" id="GO:0000463">
    <property type="term" value="P:maturation of LSU-rRNA from tricistronic rRNA transcript (SSU-rRNA, 5.8S rRNA, LSU-rRNA)"/>
    <property type="evidence" value="ECO:0007669"/>
    <property type="project" value="TreeGrafter"/>
</dbReference>
<dbReference type="GO" id="GO:0006412">
    <property type="term" value="P:translation"/>
    <property type="evidence" value="ECO:0007669"/>
    <property type="project" value="UniProtKB-UniRule"/>
</dbReference>
<dbReference type="CDD" id="cd01657">
    <property type="entry name" value="Ribosomal_L7_archeal_euk"/>
    <property type="match status" value="1"/>
</dbReference>
<dbReference type="Gene3D" id="1.10.15.30">
    <property type="match status" value="1"/>
</dbReference>
<dbReference type="Gene3D" id="3.30.1390.20">
    <property type="entry name" value="Ribosomal protein L30, ferredoxin-like fold domain"/>
    <property type="match status" value="1"/>
</dbReference>
<dbReference type="HAMAP" id="MF_01371_A">
    <property type="entry name" value="Ribosomal_uL30_A"/>
    <property type="match status" value="1"/>
</dbReference>
<dbReference type="InterPro" id="IPR036919">
    <property type="entry name" value="Ribo_uL30_ferredoxin-like_sf"/>
</dbReference>
<dbReference type="InterPro" id="IPR039699">
    <property type="entry name" value="Ribosomal_uL30"/>
</dbReference>
<dbReference type="InterPro" id="IPR005997">
    <property type="entry name" value="Ribosomal_uL30_arc"/>
</dbReference>
<dbReference type="InterPro" id="IPR035808">
    <property type="entry name" value="Ribosomal_uL30_euk_arc"/>
</dbReference>
<dbReference type="InterPro" id="IPR016082">
    <property type="entry name" value="Ribosomal_uL30_ferredoxin-like"/>
</dbReference>
<dbReference type="NCBIfam" id="NF004711">
    <property type="entry name" value="PRK06049.1"/>
    <property type="match status" value="1"/>
</dbReference>
<dbReference type="NCBIfam" id="TIGR01309">
    <property type="entry name" value="uL30_arch"/>
    <property type="match status" value="1"/>
</dbReference>
<dbReference type="PANTHER" id="PTHR11524">
    <property type="entry name" value="60S RIBOSOMAL PROTEIN L7"/>
    <property type="match status" value="1"/>
</dbReference>
<dbReference type="PANTHER" id="PTHR11524:SF16">
    <property type="entry name" value="LARGE RIBOSOMAL SUBUNIT PROTEIN UL30"/>
    <property type="match status" value="1"/>
</dbReference>
<dbReference type="Pfam" id="PF00327">
    <property type="entry name" value="Ribosomal_L30"/>
    <property type="match status" value="1"/>
</dbReference>
<dbReference type="SUPFAM" id="SSF55129">
    <property type="entry name" value="Ribosomal protein L30p/L7e"/>
    <property type="match status" value="1"/>
</dbReference>
<proteinExistence type="inferred from homology"/>
<name>RL30_NATPD</name>